<keyword id="KW-0328">Glycosyltransferase</keyword>
<keyword id="KW-1185">Reference proteome</keyword>
<keyword id="KW-0694">RNA-binding</keyword>
<keyword id="KW-0804">Transcription</keyword>
<keyword id="KW-0805">Transcription regulation</keyword>
<keyword id="KW-0806">Transcription termination</keyword>
<keyword id="KW-0808">Transferase</keyword>
<gene>
    <name evidence="1" type="primary">pyrR</name>
    <name type="ordered locus">CKL_1201</name>
</gene>
<proteinExistence type="inferred from homology"/>
<comment type="function">
    <text evidence="1">Regulates transcriptional attenuation of the pyrimidine nucleotide (pyr) operon by binding in a uridine-dependent manner to specific sites on pyr mRNA. This disrupts an antiterminator hairpin in the RNA and favors formation of a downstream transcription terminator, leading to a reduced expression of downstream genes.</text>
</comment>
<comment type="function">
    <text evidence="1">Also displays a weak uracil phosphoribosyltransferase activity which is not physiologically significant.</text>
</comment>
<comment type="catalytic activity">
    <reaction evidence="1">
        <text>UMP + diphosphate = 5-phospho-alpha-D-ribose 1-diphosphate + uracil</text>
        <dbReference type="Rhea" id="RHEA:13017"/>
        <dbReference type="ChEBI" id="CHEBI:17568"/>
        <dbReference type="ChEBI" id="CHEBI:33019"/>
        <dbReference type="ChEBI" id="CHEBI:57865"/>
        <dbReference type="ChEBI" id="CHEBI:58017"/>
        <dbReference type="EC" id="2.4.2.9"/>
    </reaction>
</comment>
<comment type="subunit">
    <text evidence="1">Homodimer and homohexamer; in equilibrium.</text>
</comment>
<comment type="similarity">
    <text evidence="1">Belongs to the purine/pyrimidine phosphoribosyltransferase family. PyrR subfamily.</text>
</comment>
<evidence type="ECO:0000255" key="1">
    <source>
        <dbReference type="HAMAP-Rule" id="MF_01219"/>
    </source>
</evidence>
<name>PYRR_CLOK5</name>
<feature type="chain" id="PRO_1000085650" description="Bifunctional protein PyrR">
    <location>
        <begin position="1"/>
        <end position="177"/>
    </location>
</feature>
<feature type="short sequence motif" description="PRPP-binding" evidence="1">
    <location>
        <begin position="98"/>
        <end position="110"/>
    </location>
</feature>
<reference key="1">
    <citation type="journal article" date="2008" name="Proc. Natl. Acad. Sci. U.S.A.">
        <title>The genome of Clostridium kluyveri, a strict anaerobe with unique metabolic features.</title>
        <authorList>
            <person name="Seedorf H."/>
            <person name="Fricke W.F."/>
            <person name="Veith B."/>
            <person name="Brueggemann H."/>
            <person name="Liesegang H."/>
            <person name="Strittmatter A."/>
            <person name="Miethke M."/>
            <person name="Buckel W."/>
            <person name="Hinderberger J."/>
            <person name="Li F."/>
            <person name="Hagemeier C."/>
            <person name="Thauer R.K."/>
            <person name="Gottschalk G."/>
        </authorList>
    </citation>
    <scope>NUCLEOTIDE SEQUENCE [LARGE SCALE GENOMIC DNA]</scope>
    <source>
        <strain>ATCC 8527 / DSM 555 / NBRC 12016 / NCIMB 10680 / K1</strain>
    </source>
</reference>
<accession>A5N7G2</accession>
<dbReference type="EC" id="2.4.2.9" evidence="1"/>
<dbReference type="EMBL" id="CP000673">
    <property type="protein sequence ID" value="EDK33243.1"/>
    <property type="molecule type" value="Genomic_DNA"/>
</dbReference>
<dbReference type="RefSeq" id="WP_012101582.1">
    <property type="nucleotide sequence ID" value="NC_009706.1"/>
</dbReference>
<dbReference type="SMR" id="A5N7G2"/>
<dbReference type="STRING" id="431943.CKL_1201"/>
<dbReference type="KEGG" id="ckl:CKL_1201"/>
<dbReference type="eggNOG" id="COG2065">
    <property type="taxonomic scope" value="Bacteria"/>
</dbReference>
<dbReference type="HOGENOM" id="CLU_094234_2_1_9"/>
<dbReference type="Proteomes" id="UP000002411">
    <property type="component" value="Chromosome"/>
</dbReference>
<dbReference type="GO" id="GO:0003723">
    <property type="term" value="F:RNA binding"/>
    <property type="evidence" value="ECO:0007669"/>
    <property type="project" value="UniProtKB-UniRule"/>
</dbReference>
<dbReference type="GO" id="GO:0004845">
    <property type="term" value="F:uracil phosphoribosyltransferase activity"/>
    <property type="evidence" value="ECO:0007669"/>
    <property type="project" value="UniProtKB-UniRule"/>
</dbReference>
<dbReference type="GO" id="GO:0006353">
    <property type="term" value="P:DNA-templated transcription termination"/>
    <property type="evidence" value="ECO:0007669"/>
    <property type="project" value="UniProtKB-UniRule"/>
</dbReference>
<dbReference type="CDD" id="cd06223">
    <property type="entry name" value="PRTases_typeI"/>
    <property type="match status" value="1"/>
</dbReference>
<dbReference type="FunFam" id="3.40.50.2020:FF:000020">
    <property type="entry name" value="Bifunctional protein PyrR"/>
    <property type="match status" value="1"/>
</dbReference>
<dbReference type="Gene3D" id="3.40.50.2020">
    <property type="match status" value="1"/>
</dbReference>
<dbReference type="HAMAP" id="MF_01219">
    <property type="entry name" value="PyrR"/>
    <property type="match status" value="1"/>
</dbReference>
<dbReference type="InterPro" id="IPR000836">
    <property type="entry name" value="PRibTrfase_dom"/>
</dbReference>
<dbReference type="InterPro" id="IPR029057">
    <property type="entry name" value="PRTase-like"/>
</dbReference>
<dbReference type="InterPro" id="IPR023050">
    <property type="entry name" value="PyrR"/>
</dbReference>
<dbReference type="InterPro" id="IPR050137">
    <property type="entry name" value="PyrR_bifunctional"/>
</dbReference>
<dbReference type="NCBIfam" id="NF003548">
    <property type="entry name" value="PRK05205.1-4"/>
    <property type="match status" value="1"/>
</dbReference>
<dbReference type="NCBIfam" id="NF003549">
    <property type="entry name" value="PRK05205.1-5"/>
    <property type="match status" value="1"/>
</dbReference>
<dbReference type="PANTHER" id="PTHR11608">
    <property type="entry name" value="BIFUNCTIONAL PROTEIN PYRR"/>
    <property type="match status" value="1"/>
</dbReference>
<dbReference type="PANTHER" id="PTHR11608:SF0">
    <property type="entry name" value="BIFUNCTIONAL PROTEIN PYRR"/>
    <property type="match status" value="1"/>
</dbReference>
<dbReference type="Pfam" id="PF00156">
    <property type="entry name" value="Pribosyltran"/>
    <property type="match status" value="1"/>
</dbReference>
<dbReference type="SUPFAM" id="SSF53271">
    <property type="entry name" value="PRTase-like"/>
    <property type="match status" value="1"/>
</dbReference>
<sequence length="177" mass="20149">MKLKALILDEKAMNRTLTRISHEIIEKNKGAEDIVLVGIKRRGYPLAKRISENIYKIEKLKLRVESVDISLYRDDLSRLSDQPAIKKSHPIDVEDKKIILVDDVIYTGRTARAAIDAIIHSGRPKLIQLAVLIDRGHRELPIRADYVGKNIPTSRDEIVSVEISEIDKCNSVKIYEV</sequence>
<organism>
    <name type="scientific">Clostridium kluyveri (strain ATCC 8527 / DSM 555 / NBRC 12016 / NCIMB 10680 / K1)</name>
    <dbReference type="NCBI Taxonomy" id="431943"/>
    <lineage>
        <taxon>Bacteria</taxon>
        <taxon>Bacillati</taxon>
        <taxon>Bacillota</taxon>
        <taxon>Clostridia</taxon>
        <taxon>Eubacteriales</taxon>
        <taxon>Clostridiaceae</taxon>
        <taxon>Clostridium</taxon>
    </lineage>
</organism>
<protein>
    <recommendedName>
        <fullName evidence="1">Bifunctional protein PyrR</fullName>
    </recommendedName>
    <domain>
        <recommendedName>
            <fullName evidence="1">Pyrimidine operon regulatory protein</fullName>
        </recommendedName>
    </domain>
    <domain>
        <recommendedName>
            <fullName evidence="1">Uracil phosphoribosyltransferase</fullName>
            <shortName evidence="1">UPRTase</shortName>
            <ecNumber evidence="1">2.4.2.9</ecNumber>
        </recommendedName>
    </domain>
</protein>